<reference key="1">
    <citation type="journal article" date="2012" name="Environ. Microbiol.">
        <title>The genome sequence of Desulfatibacillum alkenivorans AK-01: a blueprint for anaerobic alkane oxidation.</title>
        <authorList>
            <person name="Callaghan A.V."/>
            <person name="Morris B.E."/>
            <person name="Pereira I.A."/>
            <person name="McInerney M.J."/>
            <person name="Austin R.N."/>
            <person name="Groves J.T."/>
            <person name="Kukor J.J."/>
            <person name="Suflita J.M."/>
            <person name="Young L.Y."/>
            <person name="Zylstra G.J."/>
            <person name="Wawrik B."/>
        </authorList>
    </citation>
    <scope>NUCLEOTIDE SEQUENCE [LARGE SCALE GENOMIC DNA]</scope>
    <source>
        <strain>AK-01</strain>
    </source>
</reference>
<sequence>METENIHSFDVSLFSSCRVLVVGDMMIDEYLWGEVSRISPEAPVQVVEVKKTTSTLGGAGNVVNNLTALGAKVSVAGVMGGGKAGDLLNGKLTALGVNTEGLLVDQGRATTRKTRVIGANQQMLRIDRESKQEISEEQVQAIVRFAQNQIPQCDLVIASDYGKGVLTRSLMEELAKICKTAGKALIVDPKGMDYSKYKGATCITPNKKEASQASGVEIKDQASLERAAAKLLEIAGAEKILITLGKDGMALFSPGEEPFRVHAQARQVFDVSGAGDTVISVLGLSLAAGASYKTAAALANTAAGIVVAKVGTATVDQAELKAQLQDQPIAYQAKLKPLQELKSALENLRRQGKKIILTNGCFDLLHEGHINLLEQSRKLGDVLVVAVDDDESVRMVKGQGRPIIRERERVKIISAMTGVDFVTVFSTNQLDELIRAVKPDILTKGGNYKPDQVLGHEIVEELGGRIVLIPDASDVSSTRIIQDIRNGRG</sequence>
<proteinExistence type="inferred from homology"/>
<accession>B8FB71</accession>
<name>HLDE_DESAL</name>
<comment type="function">
    <text evidence="1">Catalyzes the phosphorylation of D-glycero-D-manno-heptose 7-phosphate at the C-1 position to selectively form D-glycero-beta-D-manno-heptose-1,7-bisphosphate.</text>
</comment>
<comment type="function">
    <text evidence="1">Catalyzes the ADP transfer from ATP to D-glycero-beta-D-manno-heptose 1-phosphate, yielding ADP-D-glycero-beta-D-manno-heptose.</text>
</comment>
<comment type="catalytic activity">
    <reaction evidence="1">
        <text>D-glycero-beta-D-manno-heptose 7-phosphate + ATP = D-glycero-beta-D-manno-heptose 1,7-bisphosphate + ADP + H(+)</text>
        <dbReference type="Rhea" id="RHEA:27473"/>
        <dbReference type="ChEBI" id="CHEBI:15378"/>
        <dbReference type="ChEBI" id="CHEBI:30616"/>
        <dbReference type="ChEBI" id="CHEBI:60204"/>
        <dbReference type="ChEBI" id="CHEBI:60208"/>
        <dbReference type="ChEBI" id="CHEBI:456216"/>
        <dbReference type="EC" id="2.7.1.167"/>
    </reaction>
</comment>
<comment type="catalytic activity">
    <reaction evidence="1">
        <text>D-glycero-beta-D-manno-heptose 1-phosphate + ATP + H(+) = ADP-D-glycero-beta-D-manno-heptose + diphosphate</text>
        <dbReference type="Rhea" id="RHEA:27465"/>
        <dbReference type="ChEBI" id="CHEBI:15378"/>
        <dbReference type="ChEBI" id="CHEBI:30616"/>
        <dbReference type="ChEBI" id="CHEBI:33019"/>
        <dbReference type="ChEBI" id="CHEBI:59967"/>
        <dbReference type="ChEBI" id="CHEBI:61593"/>
        <dbReference type="EC" id="2.7.7.70"/>
    </reaction>
</comment>
<comment type="pathway">
    <text evidence="1">Nucleotide-sugar biosynthesis; ADP-L-glycero-beta-D-manno-heptose biosynthesis; ADP-L-glycero-beta-D-manno-heptose from D-glycero-beta-D-manno-heptose 7-phosphate: step 1/4.</text>
</comment>
<comment type="pathway">
    <text evidence="1">Nucleotide-sugar biosynthesis; ADP-L-glycero-beta-D-manno-heptose biosynthesis; ADP-L-glycero-beta-D-manno-heptose from D-glycero-beta-D-manno-heptose 7-phosphate: step 3/4.</text>
</comment>
<comment type="subunit">
    <text evidence="1">Homodimer.</text>
</comment>
<comment type="similarity">
    <text evidence="1">In the N-terminal section; belongs to the carbohydrate kinase PfkB family.</text>
</comment>
<comment type="similarity">
    <text evidence="1">In the C-terminal section; belongs to the cytidylyltransferase family.</text>
</comment>
<keyword id="KW-0067">ATP-binding</keyword>
<keyword id="KW-0119">Carbohydrate metabolism</keyword>
<keyword id="KW-0418">Kinase</keyword>
<keyword id="KW-0511">Multifunctional enzyme</keyword>
<keyword id="KW-0547">Nucleotide-binding</keyword>
<keyword id="KW-0548">Nucleotidyltransferase</keyword>
<keyword id="KW-1185">Reference proteome</keyword>
<keyword id="KW-0808">Transferase</keyword>
<gene>
    <name evidence="1" type="primary">hldE</name>
    <name type="ordered locus">Dalk_2824</name>
</gene>
<dbReference type="EC" id="2.7.1.167" evidence="1"/>
<dbReference type="EC" id="2.7.7.70" evidence="1"/>
<dbReference type="EMBL" id="CP001322">
    <property type="protein sequence ID" value="ACL04515.1"/>
    <property type="molecule type" value="Genomic_DNA"/>
</dbReference>
<dbReference type="RefSeq" id="WP_015947585.1">
    <property type="nucleotide sequence ID" value="NC_011768.1"/>
</dbReference>
<dbReference type="SMR" id="B8FB71"/>
<dbReference type="KEGG" id="dal:Dalk_2824"/>
<dbReference type="eggNOG" id="COG0615">
    <property type="taxonomic scope" value="Bacteria"/>
</dbReference>
<dbReference type="eggNOG" id="COG2870">
    <property type="taxonomic scope" value="Bacteria"/>
</dbReference>
<dbReference type="HOGENOM" id="CLU_021150_2_1_7"/>
<dbReference type="UniPathway" id="UPA00356">
    <property type="reaction ID" value="UER00437"/>
</dbReference>
<dbReference type="UniPathway" id="UPA00356">
    <property type="reaction ID" value="UER00439"/>
</dbReference>
<dbReference type="Proteomes" id="UP000000739">
    <property type="component" value="Chromosome"/>
</dbReference>
<dbReference type="GO" id="GO:0005829">
    <property type="term" value="C:cytosol"/>
    <property type="evidence" value="ECO:0007669"/>
    <property type="project" value="TreeGrafter"/>
</dbReference>
<dbReference type="GO" id="GO:0005524">
    <property type="term" value="F:ATP binding"/>
    <property type="evidence" value="ECO:0007669"/>
    <property type="project" value="UniProtKB-UniRule"/>
</dbReference>
<dbReference type="GO" id="GO:0033785">
    <property type="term" value="F:heptose 7-phosphate kinase activity"/>
    <property type="evidence" value="ECO:0007669"/>
    <property type="project" value="UniProtKB-UniRule"/>
</dbReference>
<dbReference type="GO" id="GO:0033786">
    <property type="term" value="F:heptose-1-phosphate adenylyltransferase activity"/>
    <property type="evidence" value="ECO:0007669"/>
    <property type="project" value="UniProtKB-UniRule"/>
</dbReference>
<dbReference type="GO" id="GO:0016773">
    <property type="term" value="F:phosphotransferase activity, alcohol group as acceptor"/>
    <property type="evidence" value="ECO:0007669"/>
    <property type="project" value="InterPro"/>
</dbReference>
<dbReference type="GO" id="GO:0097171">
    <property type="term" value="P:ADP-L-glycero-beta-D-manno-heptose biosynthetic process"/>
    <property type="evidence" value="ECO:0007669"/>
    <property type="project" value="UniProtKB-UniPathway"/>
</dbReference>
<dbReference type="CDD" id="cd01172">
    <property type="entry name" value="RfaE_like"/>
    <property type="match status" value="1"/>
</dbReference>
<dbReference type="FunFam" id="3.40.1190.20:FF:000002">
    <property type="entry name" value="Bifunctional protein HldE"/>
    <property type="match status" value="1"/>
</dbReference>
<dbReference type="Gene3D" id="3.40.1190.20">
    <property type="match status" value="1"/>
</dbReference>
<dbReference type="Gene3D" id="3.40.50.620">
    <property type="entry name" value="HUPs"/>
    <property type="match status" value="1"/>
</dbReference>
<dbReference type="HAMAP" id="MF_01603">
    <property type="entry name" value="HldE"/>
    <property type="match status" value="1"/>
</dbReference>
<dbReference type="InterPro" id="IPR023030">
    <property type="entry name" value="Bifunc_HldE"/>
</dbReference>
<dbReference type="InterPro" id="IPR004821">
    <property type="entry name" value="Cyt_trans-like"/>
</dbReference>
<dbReference type="InterPro" id="IPR011611">
    <property type="entry name" value="PfkB_dom"/>
</dbReference>
<dbReference type="InterPro" id="IPR011913">
    <property type="entry name" value="RfaE_dom_I"/>
</dbReference>
<dbReference type="InterPro" id="IPR029056">
    <property type="entry name" value="Ribokinase-like"/>
</dbReference>
<dbReference type="InterPro" id="IPR014729">
    <property type="entry name" value="Rossmann-like_a/b/a_fold"/>
</dbReference>
<dbReference type="NCBIfam" id="TIGR00125">
    <property type="entry name" value="cyt_tran_rel"/>
    <property type="match status" value="1"/>
</dbReference>
<dbReference type="NCBIfam" id="TIGR02198">
    <property type="entry name" value="rfaE_dom_I"/>
    <property type="match status" value="1"/>
</dbReference>
<dbReference type="PANTHER" id="PTHR46969">
    <property type="entry name" value="BIFUNCTIONAL PROTEIN HLDE"/>
    <property type="match status" value="1"/>
</dbReference>
<dbReference type="PANTHER" id="PTHR46969:SF1">
    <property type="entry name" value="BIFUNCTIONAL PROTEIN HLDE"/>
    <property type="match status" value="1"/>
</dbReference>
<dbReference type="Pfam" id="PF01467">
    <property type="entry name" value="CTP_transf_like"/>
    <property type="match status" value="1"/>
</dbReference>
<dbReference type="Pfam" id="PF00294">
    <property type="entry name" value="PfkB"/>
    <property type="match status" value="1"/>
</dbReference>
<dbReference type="SUPFAM" id="SSF52374">
    <property type="entry name" value="Nucleotidylyl transferase"/>
    <property type="match status" value="1"/>
</dbReference>
<dbReference type="SUPFAM" id="SSF53613">
    <property type="entry name" value="Ribokinase-like"/>
    <property type="match status" value="1"/>
</dbReference>
<feature type="chain" id="PRO_1000148123" description="Bifunctional protein HldE">
    <location>
        <begin position="1"/>
        <end position="489"/>
    </location>
</feature>
<feature type="region of interest" description="Ribokinase">
    <location>
        <begin position="1"/>
        <end position="328"/>
    </location>
</feature>
<feature type="region of interest" description="Cytidylyltransferase">
    <location>
        <begin position="357"/>
        <end position="489"/>
    </location>
</feature>
<feature type="active site" evidence="1">
    <location>
        <position position="276"/>
    </location>
</feature>
<feature type="binding site" evidence="1">
    <location>
        <begin position="206"/>
        <end position="209"/>
    </location>
    <ligand>
        <name>ATP</name>
        <dbReference type="ChEBI" id="CHEBI:30616"/>
    </ligand>
</feature>
<organism>
    <name type="scientific">Desulfatibacillum aliphaticivorans</name>
    <dbReference type="NCBI Taxonomy" id="218208"/>
    <lineage>
        <taxon>Bacteria</taxon>
        <taxon>Pseudomonadati</taxon>
        <taxon>Thermodesulfobacteriota</taxon>
        <taxon>Desulfobacteria</taxon>
        <taxon>Desulfobacterales</taxon>
        <taxon>Desulfatibacillaceae</taxon>
        <taxon>Desulfatibacillum</taxon>
    </lineage>
</organism>
<protein>
    <recommendedName>
        <fullName evidence="1">Bifunctional protein HldE</fullName>
    </recommendedName>
    <domain>
        <recommendedName>
            <fullName evidence="1">D-beta-D-heptose 7-phosphate kinase</fullName>
            <ecNumber evidence="1">2.7.1.167</ecNumber>
        </recommendedName>
        <alternativeName>
            <fullName evidence="1">D-beta-D-heptose 7-phosphotransferase</fullName>
        </alternativeName>
        <alternativeName>
            <fullName evidence="1">D-glycero-beta-D-manno-heptose-7-phosphate kinase</fullName>
        </alternativeName>
    </domain>
    <domain>
        <recommendedName>
            <fullName evidence="1">D-beta-D-heptose 1-phosphate adenylyltransferase</fullName>
            <ecNumber evidence="1">2.7.7.70</ecNumber>
        </recommendedName>
        <alternativeName>
            <fullName evidence="1">D-glycero-beta-D-manno-heptose 1-phosphate adenylyltransferase</fullName>
        </alternativeName>
    </domain>
</protein>
<evidence type="ECO:0000255" key="1">
    <source>
        <dbReference type="HAMAP-Rule" id="MF_01603"/>
    </source>
</evidence>